<sequence>MGVQVDKERCVGAGMCALTAPDVFTQDDDGLSEVLPGREATSGTHPLVGEAVRACPVGAVVLSSD</sequence>
<keyword id="KW-0003">3Fe-4S</keyword>
<keyword id="KW-0249">Electron transport</keyword>
<keyword id="KW-0408">Iron</keyword>
<keyword id="KW-0411">Iron-sulfur</keyword>
<keyword id="KW-0479">Metal-binding</keyword>
<keyword id="KW-0813">Transport</keyword>
<proteinExistence type="inferred from homology"/>
<feature type="chain" id="PRO_0000159315" description="Ferredoxin soy">
    <location>
        <begin position="1"/>
        <end position="65"/>
    </location>
</feature>
<feature type="domain" description="4Fe-4S ferredoxin-type" evidence="2">
    <location>
        <begin position="2"/>
        <end position="29"/>
    </location>
</feature>
<feature type="binding site" evidence="1">
    <location>
        <position position="10"/>
    </location>
    <ligand>
        <name>[3Fe-4S] cluster</name>
        <dbReference type="ChEBI" id="CHEBI:21137"/>
    </ligand>
</feature>
<feature type="binding site" evidence="1">
    <location>
        <position position="16"/>
    </location>
    <ligand>
        <name>[3Fe-4S] cluster</name>
        <dbReference type="ChEBI" id="CHEBI:21137"/>
    </ligand>
</feature>
<feature type="binding site" evidence="1">
    <location>
        <position position="55"/>
    </location>
    <ligand>
        <name>[3Fe-4S] cluster</name>
        <dbReference type="ChEBI" id="CHEBI:21137"/>
    </ligand>
</feature>
<protein>
    <recommendedName>
        <fullName>Ferredoxin soy</fullName>
    </recommendedName>
</protein>
<evidence type="ECO:0000250" key="1"/>
<evidence type="ECO:0000255" key="2">
    <source>
        <dbReference type="PROSITE-ProRule" id="PRU00711"/>
    </source>
</evidence>
<accession>P26910</accession>
<gene>
    <name type="primary">soyB</name>
</gene>
<name>FERS_STRGR</name>
<dbReference type="EMBL" id="X63601">
    <property type="protein sequence ID" value="CAA45147.1"/>
    <property type="molecule type" value="Genomic_DNA"/>
</dbReference>
<dbReference type="PIR" id="S24751">
    <property type="entry name" value="S24751"/>
</dbReference>
<dbReference type="SMR" id="P26910"/>
<dbReference type="GO" id="GO:0051538">
    <property type="term" value="F:3 iron, 4 sulfur cluster binding"/>
    <property type="evidence" value="ECO:0007669"/>
    <property type="project" value="UniProtKB-KW"/>
</dbReference>
<dbReference type="GO" id="GO:0009055">
    <property type="term" value="F:electron transfer activity"/>
    <property type="evidence" value="ECO:0007669"/>
    <property type="project" value="InterPro"/>
</dbReference>
<dbReference type="GO" id="GO:0005506">
    <property type="term" value="F:iron ion binding"/>
    <property type="evidence" value="ECO:0007669"/>
    <property type="project" value="InterPro"/>
</dbReference>
<dbReference type="Gene3D" id="3.30.70.20">
    <property type="match status" value="1"/>
</dbReference>
<dbReference type="InterPro" id="IPR001080">
    <property type="entry name" value="3Fe4S_ferredoxin"/>
</dbReference>
<dbReference type="InterPro" id="IPR017896">
    <property type="entry name" value="4Fe4S_Fe-S-bd"/>
</dbReference>
<dbReference type="InterPro" id="IPR051269">
    <property type="entry name" value="Fe-S_cluster_ET"/>
</dbReference>
<dbReference type="PANTHER" id="PTHR36923">
    <property type="entry name" value="FERREDOXIN"/>
    <property type="match status" value="1"/>
</dbReference>
<dbReference type="PANTHER" id="PTHR36923:SF3">
    <property type="entry name" value="FERREDOXIN"/>
    <property type="match status" value="1"/>
</dbReference>
<dbReference type="Pfam" id="PF13459">
    <property type="entry name" value="Fer4_15"/>
    <property type="match status" value="1"/>
</dbReference>
<dbReference type="PRINTS" id="PR00352">
    <property type="entry name" value="3FE4SFRDOXIN"/>
</dbReference>
<dbReference type="SUPFAM" id="SSF54862">
    <property type="entry name" value="4Fe-4S ferredoxins"/>
    <property type="match status" value="1"/>
</dbReference>
<dbReference type="PROSITE" id="PS51379">
    <property type="entry name" value="4FE4S_FER_2"/>
    <property type="match status" value="1"/>
</dbReference>
<organism>
    <name type="scientific">Streptomyces griseus</name>
    <dbReference type="NCBI Taxonomy" id="1911"/>
    <lineage>
        <taxon>Bacteria</taxon>
        <taxon>Bacillati</taxon>
        <taxon>Actinomycetota</taxon>
        <taxon>Actinomycetes</taxon>
        <taxon>Kitasatosporales</taxon>
        <taxon>Streptomycetaceae</taxon>
        <taxon>Streptomyces</taxon>
    </lineage>
</organism>
<reference key="1">
    <citation type="journal article" date="1992" name="Mol. Microbiol.">
        <title>Cloning, nucleotide sequence determination and expression of the genes encoding cytochrome P-450soy (soyC) and ferredoxinsoy (soyB) from Streptomyces griseus.</title>
        <authorList>
            <person name="Trower M.K."/>
            <person name="Lenstra R."/>
            <person name="Omer C."/>
            <person name="Buchholz S.E."/>
            <person name="Sariaslani F.S."/>
        </authorList>
    </citation>
    <scope>NUCLEOTIDE SEQUENCE [GENOMIC DNA]</scope>
    <source>
        <strain>ATCC 13273 / DSM 12135 / NBRC 3746</strain>
    </source>
</reference>
<comment type="function">
    <text>Electron transport protein for the cytochrome P-450-SOY system.</text>
</comment>
<comment type="cofactor">
    <cofactor evidence="1">
        <name>[3Fe-4S] cluster</name>
        <dbReference type="ChEBI" id="CHEBI:21137"/>
    </cofactor>
    <text evidence="1">Binds 1 [3Fe-4S] cluster.</text>
</comment>